<evidence type="ECO:0000305" key="1"/>
<protein>
    <recommendedName>
        <fullName>Uncharacterized protein DP63R</fullName>
    </recommendedName>
</protein>
<sequence>MWFCIDLGADAFEEAGALAGKKNKRALQHILGLNIFKQELIPPCKDPDPFQIQLLLKNYTLKNVSTIFSYYCQ</sequence>
<gene>
    <name type="ordered locus">Ken-160</name>
</gene>
<organismHost>
    <name type="scientific">Ornithodoros</name>
    <name type="common">relapsing fever ticks</name>
    <dbReference type="NCBI Taxonomy" id="6937"/>
</organismHost>
<organismHost>
    <name type="scientific">Phacochoerus aethiopicus</name>
    <name type="common">Warthog</name>
    <dbReference type="NCBI Taxonomy" id="85517"/>
</organismHost>
<organismHost>
    <name type="scientific">Phacochoerus africanus</name>
    <name type="common">Warthog</name>
    <dbReference type="NCBI Taxonomy" id="41426"/>
</organismHost>
<organismHost>
    <name type="scientific">Potamochoerus larvatus</name>
    <name type="common">Bushpig</name>
    <dbReference type="NCBI Taxonomy" id="273792"/>
</organismHost>
<organismHost>
    <name type="scientific">Sus scrofa</name>
    <name type="common">Pig</name>
    <dbReference type="NCBI Taxonomy" id="9823"/>
</organismHost>
<accession>P0CAI7</accession>
<feature type="chain" id="PRO_0000373711" description="Uncharacterized protein DP63R">
    <location>
        <begin position="1"/>
        <end position="73"/>
    </location>
</feature>
<dbReference type="EMBL" id="AY261360">
    <property type="status" value="NOT_ANNOTATED_CDS"/>
    <property type="molecule type" value="Genomic_DNA"/>
</dbReference>
<dbReference type="Proteomes" id="UP000000861">
    <property type="component" value="Segment"/>
</dbReference>
<dbReference type="GO" id="GO:0042330">
    <property type="term" value="P:taxis"/>
    <property type="evidence" value="ECO:0007669"/>
    <property type="project" value="InterPro"/>
</dbReference>
<dbReference type="InterPro" id="IPR002595">
    <property type="entry name" value="ASFV_MGF360"/>
</dbReference>
<dbReference type="Pfam" id="PF01671">
    <property type="entry name" value="ASFV_360"/>
    <property type="match status" value="1"/>
</dbReference>
<organism>
    <name type="scientific">African swine fever virus (isolate Pig/Kenya/KEN-50/1950)</name>
    <name type="common">ASFV</name>
    <dbReference type="NCBI Taxonomy" id="561445"/>
    <lineage>
        <taxon>Viruses</taxon>
        <taxon>Varidnaviria</taxon>
        <taxon>Bamfordvirae</taxon>
        <taxon>Nucleocytoviricota</taxon>
        <taxon>Pokkesviricetes</taxon>
        <taxon>Asfuvirales</taxon>
        <taxon>Asfarviridae</taxon>
        <taxon>Asfivirus</taxon>
        <taxon>African swine fever virus</taxon>
    </lineage>
</organism>
<name>VF63R_ASFK5</name>
<proteinExistence type="inferred from homology"/>
<reference key="1">
    <citation type="submission" date="2003-03" db="EMBL/GenBank/DDBJ databases">
        <title>African swine fever virus genomes.</title>
        <authorList>
            <person name="Kutish G.F."/>
            <person name="Rock D.L."/>
        </authorList>
    </citation>
    <scope>NUCLEOTIDE SEQUENCE [LARGE SCALE GENOMIC DNA]</scope>
</reference>
<comment type="similarity">
    <text evidence="1">Belongs to the asfivirus DP63R family.</text>
</comment>